<gene>
    <name type="primary">nagD</name>
    <name type="ordered locus">SA0790</name>
</gene>
<feature type="chain" id="PRO_0000271487" description="Acid sugar phosphatase">
    <location>
        <begin position="1"/>
        <end position="259"/>
    </location>
</feature>
<protein>
    <recommendedName>
        <fullName evidence="1">Acid sugar phosphatase</fullName>
        <ecNumber evidence="1">3.1.3.-</ecNumber>
    </recommendedName>
</protein>
<proteinExistence type="inferred from homology"/>
<reference key="1">
    <citation type="journal article" date="2001" name="Lancet">
        <title>Whole genome sequencing of meticillin-resistant Staphylococcus aureus.</title>
        <authorList>
            <person name="Kuroda M."/>
            <person name="Ohta T."/>
            <person name="Uchiyama I."/>
            <person name="Baba T."/>
            <person name="Yuzawa H."/>
            <person name="Kobayashi I."/>
            <person name="Cui L."/>
            <person name="Oguchi A."/>
            <person name="Aoki K."/>
            <person name="Nagai Y."/>
            <person name="Lian J.-Q."/>
            <person name="Ito T."/>
            <person name="Kanamori M."/>
            <person name="Matsumaru H."/>
            <person name="Maruyama A."/>
            <person name="Murakami H."/>
            <person name="Hosoyama A."/>
            <person name="Mizutani-Ui Y."/>
            <person name="Takahashi N.K."/>
            <person name="Sawano T."/>
            <person name="Inoue R."/>
            <person name="Kaito C."/>
            <person name="Sekimizu K."/>
            <person name="Hirakawa H."/>
            <person name="Kuhara S."/>
            <person name="Goto S."/>
            <person name="Yabuzaki J."/>
            <person name="Kanehisa M."/>
            <person name="Yamashita A."/>
            <person name="Oshima K."/>
            <person name="Furuya K."/>
            <person name="Yoshino C."/>
            <person name="Shiba T."/>
            <person name="Hattori M."/>
            <person name="Ogasawara N."/>
            <person name="Hayashi H."/>
            <person name="Hiramatsu K."/>
        </authorList>
    </citation>
    <scope>NUCLEOTIDE SEQUENCE [LARGE SCALE GENOMIC DNA]</scope>
    <source>
        <strain>N315</strain>
    </source>
</reference>
<keyword id="KW-0378">Hydrolase</keyword>
<keyword id="KW-0460">Magnesium</keyword>
<keyword id="KW-0479">Metal-binding</keyword>
<name>NAGD_STAAN</name>
<sequence length="259" mass="27946">MKQYKAYLIDLDGTMYMGTDEIDGAKQFIDYLNVKGIPHLYVTNNSTKTPEQVTEKLREMHIDAKPEEVVTSALATADYISEQSPGASVYMLGGSGLNTALTEAGLVIKNDEHVDYVVIGLDEQVTYEKLAIATLGVRNGATFISTNPDVSIPKERGLLPGNGAITSVVSVSTGVSPQFIGKPEPIIMVKALEILGLDKSEVAMVGDLYDTDIMSGINVGMDTIHVQTGVSTLEDVQNKNVPPTYSFKDLNEAIAELEK</sequence>
<evidence type="ECO:0000250" key="1">
    <source>
        <dbReference type="UniProtKB" id="Q99VE8"/>
    </source>
</evidence>
<evidence type="ECO:0000305" key="2"/>
<organism>
    <name type="scientific">Staphylococcus aureus (strain N315)</name>
    <dbReference type="NCBI Taxonomy" id="158879"/>
    <lineage>
        <taxon>Bacteria</taxon>
        <taxon>Bacillati</taxon>
        <taxon>Bacillota</taxon>
        <taxon>Bacilli</taxon>
        <taxon>Bacillales</taxon>
        <taxon>Staphylococcaceae</taxon>
        <taxon>Staphylococcus</taxon>
    </lineage>
</organism>
<dbReference type="EC" id="3.1.3.-" evidence="1"/>
<dbReference type="EMBL" id="BA000018">
    <property type="protein sequence ID" value="BAB42029.1"/>
    <property type="molecule type" value="Genomic_DNA"/>
</dbReference>
<dbReference type="PIR" id="B89859">
    <property type="entry name" value="B89859"/>
</dbReference>
<dbReference type="RefSeq" id="WP_000816184.1">
    <property type="nucleotide sequence ID" value="NC_002745.2"/>
</dbReference>
<dbReference type="SMR" id="Q7A6K4"/>
<dbReference type="EnsemblBacteria" id="BAB42029">
    <property type="protein sequence ID" value="BAB42029"/>
    <property type="gene ID" value="BAB42029"/>
</dbReference>
<dbReference type="KEGG" id="sau:SA0790"/>
<dbReference type="HOGENOM" id="CLU_043473_1_1_9"/>
<dbReference type="GO" id="GO:0005737">
    <property type="term" value="C:cytoplasm"/>
    <property type="evidence" value="ECO:0007669"/>
    <property type="project" value="TreeGrafter"/>
</dbReference>
<dbReference type="GO" id="GO:0046872">
    <property type="term" value="F:metal ion binding"/>
    <property type="evidence" value="ECO:0007669"/>
    <property type="project" value="UniProtKB-KW"/>
</dbReference>
<dbReference type="GO" id="GO:0016791">
    <property type="term" value="F:phosphatase activity"/>
    <property type="evidence" value="ECO:0007669"/>
    <property type="project" value="TreeGrafter"/>
</dbReference>
<dbReference type="CDD" id="cd07530">
    <property type="entry name" value="HAD_Pase_UmpH-like"/>
    <property type="match status" value="1"/>
</dbReference>
<dbReference type="FunFam" id="3.40.50.1000:FF:000053">
    <property type="entry name" value="TIGR01457 family HAD hydrolase"/>
    <property type="match status" value="1"/>
</dbReference>
<dbReference type="Gene3D" id="3.40.50.1000">
    <property type="entry name" value="HAD superfamily/HAD-like"/>
    <property type="match status" value="2"/>
</dbReference>
<dbReference type="InterPro" id="IPR036412">
    <property type="entry name" value="HAD-like_sf"/>
</dbReference>
<dbReference type="InterPro" id="IPR006357">
    <property type="entry name" value="HAD-SF_hydro_IIA"/>
</dbReference>
<dbReference type="InterPro" id="IPR006354">
    <property type="entry name" value="HAD-SF_hydro_IIA_hyp1"/>
</dbReference>
<dbReference type="InterPro" id="IPR023214">
    <property type="entry name" value="HAD_sf"/>
</dbReference>
<dbReference type="NCBIfam" id="TIGR01460">
    <property type="entry name" value="HAD-SF-IIA"/>
    <property type="match status" value="1"/>
</dbReference>
<dbReference type="NCBIfam" id="TIGR01457">
    <property type="entry name" value="HAD-SF-IIA-hyp2"/>
    <property type="match status" value="1"/>
</dbReference>
<dbReference type="PANTHER" id="PTHR19288">
    <property type="entry name" value="4-NITROPHENYLPHOSPHATASE-RELATED"/>
    <property type="match status" value="1"/>
</dbReference>
<dbReference type="PANTHER" id="PTHR19288:SF46">
    <property type="entry name" value="HALOACID DEHALOGENASE-LIKE HYDROLASE DOMAIN-CONTAINING PROTEIN 2"/>
    <property type="match status" value="1"/>
</dbReference>
<dbReference type="Pfam" id="PF13344">
    <property type="entry name" value="Hydrolase_6"/>
    <property type="match status" value="1"/>
</dbReference>
<dbReference type="Pfam" id="PF13242">
    <property type="entry name" value="Hydrolase_like"/>
    <property type="match status" value="1"/>
</dbReference>
<dbReference type="PIRSF" id="PIRSF000915">
    <property type="entry name" value="PGP-type_phosphatase"/>
    <property type="match status" value="1"/>
</dbReference>
<dbReference type="SFLD" id="SFLDG01139">
    <property type="entry name" value="C2.A:_Pyridoxal_Phosphate_Phos"/>
    <property type="match status" value="1"/>
</dbReference>
<dbReference type="SFLD" id="SFLDS00003">
    <property type="entry name" value="Haloacid_Dehalogenase"/>
    <property type="match status" value="1"/>
</dbReference>
<dbReference type="SUPFAM" id="SSF56784">
    <property type="entry name" value="HAD-like"/>
    <property type="match status" value="1"/>
</dbReference>
<accession>Q7A6K4</accession>
<comment type="function">
    <text evidence="1">Catalyzes the dephosphorylation of 2-6 carbon acid sugars in vitro.</text>
</comment>
<comment type="cofactor">
    <cofactor evidence="1">
        <name>Mg(2+)</name>
        <dbReference type="ChEBI" id="CHEBI:18420"/>
    </cofactor>
</comment>
<comment type="similarity">
    <text evidence="2">Belongs to the HAD-like hydrolase superfamily. NagD family.</text>
</comment>